<accession>P27312</accession>
<accession>I4EPA4</accession>
<feature type="signal peptide" evidence="6">
    <location>
        <begin position="1"/>
        <end position="23"/>
    </location>
</feature>
<feature type="chain" id="PRO_0000036831" description="Envelopment polyprotein">
    <location>
        <begin position="24"/>
        <end position="1148"/>
    </location>
</feature>
<feature type="chain" id="PRO_0000036832" description="Glycoprotein N" evidence="1">
    <location>
        <begin position="24"/>
        <end position="658"/>
    </location>
</feature>
<feature type="chain" id="PRO_0000036833" description="Glycoprotein C" evidence="1">
    <location>
        <begin position="659"/>
        <end position="1148"/>
    </location>
</feature>
<feature type="topological domain" description="Lumenal" evidence="6">
    <location>
        <begin position="24"/>
        <end position="496"/>
    </location>
</feature>
<feature type="transmembrane region" description="Helical" evidence="6">
    <location>
        <begin position="497"/>
        <end position="517"/>
    </location>
</feature>
<feature type="topological domain" description="Cytoplasmic" evidence="6">
    <location>
        <begin position="518"/>
        <end position="637"/>
    </location>
</feature>
<feature type="transmembrane region" description="Helical" evidence="6">
    <location>
        <begin position="638"/>
        <end position="658"/>
    </location>
</feature>
<feature type="topological domain" description="Lumenal" evidence="6">
    <location>
        <begin position="659"/>
        <end position="1115"/>
    </location>
</feature>
<feature type="transmembrane region" description="Helical" evidence="6">
    <location>
        <begin position="1116"/>
        <end position="1136"/>
    </location>
</feature>
<feature type="topological domain" description="Cytoplasmic" evidence="6">
    <location>
        <begin position="1137"/>
        <end position="1148"/>
    </location>
</feature>
<feature type="domain" description="ITAM" evidence="7">
    <location>
        <begin position="621"/>
        <end position="644"/>
    </location>
</feature>
<feature type="zinc finger region" description="CCHC-type 1" evidence="5">
    <location>
        <begin position="555"/>
        <end position="575"/>
    </location>
</feature>
<feature type="zinc finger region" description="CCHC-type 2" evidence="5">
    <location>
        <begin position="580"/>
        <end position="601"/>
    </location>
</feature>
<feature type="region of interest" description="Binding to the ribonucleoprotein" evidence="8">
    <location>
        <begin position="526"/>
        <end position="543"/>
    </location>
</feature>
<feature type="region of interest" description="Binding to the ribonucleoprotein" evidence="8">
    <location>
        <begin position="598"/>
        <end position="615"/>
    </location>
</feature>
<feature type="region of interest" description="Binding to the ribonucleoprotein" evidence="8">
    <location>
        <begin position="621"/>
        <end position="635"/>
    </location>
</feature>
<feature type="region of interest" description="Fusion loop" evidence="4">
    <location>
        <begin position="767"/>
        <end position="787"/>
    </location>
</feature>
<feature type="region of interest" description="Binding to the ribonucleoprotein" evidence="8">
    <location>
        <begin position="1131"/>
        <end position="1148"/>
    </location>
</feature>
<feature type="short sequence motif" description="YxxL" evidence="2">
    <location>
        <begin position="625"/>
        <end position="628"/>
    </location>
</feature>
<feature type="site" description="Cleavage; by host signal peptidase" evidence="2">
    <location>
        <begin position="658"/>
        <end position="659"/>
    </location>
</feature>
<feature type="glycosylation site" description="N-linked (GlcNAc...) asparagine; by host" evidence="6">
    <location>
        <position position="142"/>
    </location>
</feature>
<feature type="glycosylation site" description="N-linked (GlcNAc...) asparagine; by host" evidence="6">
    <location>
        <position position="357"/>
    </location>
</feature>
<feature type="glycosylation site" description="N-linked (GlcNAc...) asparagine; by host" evidence="6">
    <location>
        <position position="409"/>
    </location>
</feature>
<feature type="glycosylation site" description="N-linked (GlcNAc...) asparagine; by host" evidence="4">
    <location>
        <position position="937"/>
    </location>
</feature>
<feature type="disulfide bond" evidence="5">
    <location>
        <begin position="34"/>
        <end position="159"/>
    </location>
</feature>
<feature type="disulfide bond" evidence="5">
    <location>
        <begin position="68"/>
        <end position="165"/>
    </location>
</feature>
<feature type="disulfide bond" evidence="5">
    <location>
        <begin position="117"/>
        <end position="136"/>
    </location>
</feature>
<feature type="disulfide bond" evidence="5">
    <location>
        <begin position="141"/>
        <end position="146"/>
    </location>
</feature>
<feature type="disulfide bond" evidence="5">
    <location>
        <begin position="183"/>
        <end position="193"/>
    </location>
</feature>
<feature type="disulfide bond" evidence="5">
    <location>
        <begin position="218"/>
        <end position="257"/>
    </location>
</feature>
<feature type="disulfide bond" evidence="5">
    <location>
        <begin position="386"/>
        <end position="445"/>
    </location>
</feature>
<feature type="disulfide bond" evidence="5">
    <location>
        <begin position="390"/>
        <end position="399"/>
    </location>
</feature>
<feature type="disulfide bond" evidence="5">
    <location>
        <begin position="415"/>
        <end position="434"/>
    </location>
</feature>
<feature type="disulfide bond" evidence="5">
    <location>
        <begin position="462"/>
        <end position="485"/>
    </location>
</feature>
<feature type="disulfide bond" evidence="2">
    <location>
        <begin position="745"/>
        <end position="780"/>
    </location>
</feature>
<feature type="disulfide bond" evidence="2">
    <location>
        <begin position="749"/>
        <end position="787"/>
    </location>
</feature>
<feature type="disulfide bond" evidence="2">
    <location>
        <begin position="761"/>
        <end position="894"/>
    </location>
</feature>
<feature type="disulfide bond" evidence="2">
    <location>
        <begin position="775"/>
        <end position="905"/>
    </location>
</feature>
<feature type="disulfide bond" evidence="2">
    <location>
        <begin position="790"/>
        <end position="913"/>
    </location>
</feature>
<feature type="disulfide bond" evidence="2">
    <location>
        <begin position="816"/>
        <end position="825"/>
    </location>
</feature>
<feature type="disulfide bond" evidence="2">
    <location>
        <begin position="833"/>
        <end position="842"/>
    </location>
</feature>
<feature type="disulfide bond" evidence="2">
    <location>
        <begin position="873"/>
        <end position="877"/>
    </location>
</feature>
<feature type="disulfide bond" evidence="2">
    <location>
        <begin position="979"/>
        <end position="1009"/>
    </location>
</feature>
<feature type="disulfide bond" evidence="2">
    <location>
        <begin position="1002"/>
        <end position="1054"/>
    </location>
</feature>
<feature type="disulfide bond" evidence="2">
    <location>
        <begin position="1019"/>
        <end position="1024"/>
    </location>
</feature>
<feature type="disulfide bond" evidence="2">
    <location>
        <begin position="1055"/>
        <end position="1060"/>
    </location>
</feature>
<feature type="disulfide bond" evidence="5">
    <location>
        <begin position="1094"/>
        <end position="1098"/>
    </location>
</feature>
<feature type="sequence variant" description="In strain: isolate Sotkamo 2009/WHO Arbovirus collection.">
    <original>K</original>
    <variation>R</variation>
    <location>
        <position position="25"/>
    </location>
</feature>
<feature type="sequence variant" description="In strain: isolate Sotkamo 2009/WHO Arbovirus collection.">
    <original>M</original>
    <variation>L</variation>
    <location>
        <position position="472"/>
    </location>
</feature>
<feature type="sequence variant" description="In strain: isolate Sotkamo 2009/WHO Arbovirus collection.">
    <original>R</original>
    <variation>K</variation>
    <location>
        <position position="536"/>
    </location>
</feature>
<feature type="sequence variant" description="In strain: isolate Sotkamo 2009/WHO Arbovirus collection.">
    <original>D</original>
    <variation>A</variation>
    <location>
        <position position="665"/>
    </location>
</feature>
<feature type="sequence variant" description="In strain: isolate Sotkamo 2009/WHO Arbovirus collection.">
    <original>G</original>
    <variation>E</variation>
    <location>
        <position position="822"/>
    </location>
</feature>
<feature type="sequence variant" description="In strain: isolate Sotkamo 2009/WHO Arbovirus collection.">
    <original>L</original>
    <variation>P</variation>
    <location>
        <position position="953"/>
    </location>
</feature>
<feature type="sequence variant" description="In strain: isolate Sotkamo 2009/WHO Arbovirus collection.">
    <original>T</original>
    <variation>I</variation>
    <location>
        <position position="988"/>
    </location>
</feature>
<feature type="sequence variant" description="In strain: isolate Sotkamo 2009/WHO Arbovirus collection.">
    <original>H</original>
    <variation>D</variation>
    <location>
        <position position="1020"/>
    </location>
</feature>
<feature type="sequence variant" description="In strain: isolate Sotkamo 2009/WHO Arbovirus collection.">
    <original>D</original>
    <variation>E</variation>
    <location>
        <position position="1145"/>
    </location>
</feature>
<gene>
    <name type="primary">GP</name>
</gene>
<proteinExistence type="evidence at protein level"/>
<name>GP_PUUMS</name>
<comment type="function">
    <molecule>Glycoprotein N</molecule>
    <text evidence="2 9 11">Forms homotetramers with glycoprotein C at the surface of the virion (By similarity). Attaches the virion to host cell receptors including integrin ITGAV/ITGB3 (By similarity). This attachment induces virion internalization predominantly through clathrin-dependent endocytosis (By similarity). Mediates the assembly and budding of infectious virus particles through its interaction with the nucleocapsid protein and the viral genome (PubMed:24755564). May dysregulate normal immune and endothelial cell responses through an ITAM motif (By similarity). Translocates to mitochondria, binds to host TUFM and recruits MAP1LC3B (By similarity). These interactions induce mitochondrial autophagy and therefore destruction of host MAVS leading to inhibition of type I interferon (IFN) responses (By similarity). Concomitant breakdown of glycoprotein N is apparently prevented by the nucleoprotein that may inhibit Gn-stimulated autophagosome-lysosome fusion (By similarity). Interacts with the viral genomic RNA (PubMed:21807393).</text>
</comment>
<comment type="function">
    <molecule>Glycoprotein C</molecule>
    <text evidence="2">Forms heterooctamers with glycoprotein N at the surface of the virion. Attaches the virion to host cell receptors including integrin ITGAV/ITGB3. This attachment induces virion internalization predominantly through clathrin-dependent endocytosis. Class II fusion protein that promotes fusion of viral membrane with host endosomal membrane after endocytosis of the virion.</text>
</comment>
<comment type="subunit">
    <molecule>Glycoprotein N</molecule>
    <text evidence="2 8 10">Homodimer (PubMed:30679542). Homotetramer; forms heterotetrameric Gn-Gc spikes in the pre-fusion conformation (By similarity). Interacts (via C-terminus) with the nucleoprotein (PubMed:20444994). Interacts with host TUFM; this interaction contributes to the virus-induced degradation of mitochondria by autophagy, which leads to degradation of host MAVS and inhibition of type I interferon (IFN) responses (By similarity). Interacts with host MAP1LC3B; this interaction contributes to the virus-induced degradation of mitochondria by autophagy, which leads to degradation of host MAVS and inhibition of type I interferon (IFN) responses (By similarity).</text>
</comment>
<comment type="subunit">
    <molecule>Glycoprotein C</molecule>
    <text evidence="4 8 10">Homodimer (PubMed:30679542). Homotetramer; forms heterotetrameric Gn-Gc spikes in the pre-fusion conformation (PubMed:30679542). Homotrimer; forms homotrimer in the post-fusion conformation at acidic pH (By similarity). Interacts (via C-terminus) with the nucleoprotein (PubMed:20444994).</text>
</comment>
<comment type="subcellular location">
    <molecule>Glycoprotein N</molecule>
    <subcellularLocation>
        <location evidence="2">Virion membrane</location>
        <topology evidence="12">Multi-pass membrane protein</topology>
    </subcellularLocation>
    <subcellularLocation>
        <location evidence="10">Host cell surface</location>
    </subcellularLocation>
    <subcellularLocation>
        <location evidence="10">Host Golgi apparatus membrane</location>
        <topology evidence="2">Multi-pass membrane protein</topology>
    </subcellularLocation>
    <subcellularLocation>
        <location evidence="10">Host endoplasmic reticulum membrane</location>
        <topology evidence="2">Multi-pass membrane protein</topology>
    </subcellularLocation>
    <subcellularLocation>
        <location evidence="2">Host mitochondrion</location>
    </subcellularLocation>
    <text evidence="10">Interaction between glycoprotein N and glycoprotein C is essential for proper targeting of glycoprotein N to the host Golgi complex, where virion budding occurs.</text>
</comment>
<comment type="subcellular location">
    <molecule>Glycoprotein C</molecule>
    <subcellularLocation>
        <location evidence="2">Virion membrane</location>
        <topology>Single-pass membrane protein</topology>
    </subcellularLocation>
    <subcellularLocation>
        <location evidence="10">Host cell surface</location>
    </subcellularLocation>
    <subcellularLocation>
        <location evidence="10">Host Golgi apparatus membrane</location>
        <topology evidence="2">Single-pass type I membrane protein</topology>
    </subcellularLocation>
    <subcellularLocation>
        <location evidence="10">Host endoplasmic reticulum membrane</location>
        <topology evidence="2">Single-pass type I membrane protein</topology>
    </subcellularLocation>
    <text evidence="2 12">Budding probably takes place at the host Golgi (Probable). Glycoprotein C cytoplasmic tail is important for efficient Golgi localization (By similarity).</text>
</comment>
<comment type="domain">
    <molecule>Glycoprotein N</molecule>
    <text evidence="2 3 5 8 13">The YxxL motif at the C-terminus is indispensable for the interaction with MAP1LC3B and for the Gn-mediated induction of mitochondrial autophagy (By similarity). The cytoplasmic tail is involved in the inhibition of the host innate immune response (By similarity). The C-terminus of the cytoplasmic tail is involved in binding to the viral genome and the nucleocapsid (Probable) (PubMed:20444994). Contains 2 contiguous zinc-fingers (By similarity).</text>
</comment>
<comment type="domain">
    <molecule>Glycoprotein C</molecule>
    <text evidence="8 10">The C-terminus is necessary for proper localization in the Golgi (PubMed:30679542). The cytoplasmic tail is involved in binding to the nucleocapsid (PubMed:20444994).</text>
</comment>
<comment type="PTM">
    <molecule>Envelopment polyprotein</molecule>
    <text evidence="2">Envelope polyprotein precursor is quickly cleaved in vivo just after synthesis, presumably by host signal peptidase.</text>
</comment>
<comment type="similarity">
    <text evidence="12">Belongs to the hantavirus envelope glycoprotein family.</text>
</comment>
<dbReference type="EMBL" id="X61034">
    <property type="protein sequence ID" value="CAA43369.1"/>
    <property type="molecule type" value="Genomic_RNA"/>
</dbReference>
<dbReference type="EMBL" id="HE801634">
    <property type="protein sequence ID" value="CCH22848.1"/>
    <property type="molecule type" value="Genomic_RNA"/>
</dbReference>
<dbReference type="PIR" id="JQ1604">
    <property type="entry name" value="JQ1604"/>
</dbReference>
<dbReference type="RefSeq" id="NP_941983.1">
    <property type="nucleotide sequence ID" value="NC_005223.1"/>
</dbReference>
<dbReference type="SMR" id="P27312"/>
<dbReference type="GlyCosmos" id="P27312">
    <property type="glycosylation" value="4 sites, No reported glycans"/>
</dbReference>
<dbReference type="KEGG" id="vg:2943082"/>
<dbReference type="Proteomes" id="UP000008482">
    <property type="component" value="Genome"/>
</dbReference>
<dbReference type="Proteomes" id="UP000110237">
    <property type="component" value="Genome"/>
</dbReference>
<dbReference type="GO" id="GO:0044167">
    <property type="term" value="C:host cell endoplasmic reticulum membrane"/>
    <property type="evidence" value="ECO:0007669"/>
    <property type="project" value="UniProtKB-SubCell"/>
</dbReference>
<dbReference type="GO" id="GO:0044178">
    <property type="term" value="C:host cell Golgi membrane"/>
    <property type="evidence" value="ECO:0007669"/>
    <property type="project" value="UniProtKB-SubCell"/>
</dbReference>
<dbReference type="GO" id="GO:0033650">
    <property type="term" value="C:host cell mitochondrion"/>
    <property type="evidence" value="ECO:0007669"/>
    <property type="project" value="UniProtKB-SubCell"/>
</dbReference>
<dbReference type="GO" id="GO:0044228">
    <property type="term" value="C:host cell surface"/>
    <property type="evidence" value="ECO:0007669"/>
    <property type="project" value="UniProtKB-SubCell"/>
</dbReference>
<dbReference type="GO" id="GO:0016020">
    <property type="term" value="C:membrane"/>
    <property type="evidence" value="ECO:0007669"/>
    <property type="project" value="UniProtKB-KW"/>
</dbReference>
<dbReference type="GO" id="GO:0055036">
    <property type="term" value="C:virion membrane"/>
    <property type="evidence" value="ECO:0007669"/>
    <property type="project" value="UniProtKB-SubCell"/>
</dbReference>
<dbReference type="GO" id="GO:0003723">
    <property type="term" value="F:RNA binding"/>
    <property type="evidence" value="ECO:0000314"/>
    <property type="project" value="UniProtKB"/>
</dbReference>
<dbReference type="GO" id="GO:0008270">
    <property type="term" value="F:zinc ion binding"/>
    <property type="evidence" value="ECO:0007669"/>
    <property type="project" value="UniProtKB-KW"/>
</dbReference>
<dbReference type="GO" id="GO:0039654">
    <property type="term" value="P:fusion of virus membrane with host endosome membrane"/>
    <property type="evidence" value="ECO:0007669"/>
    <property type="project" value="UniProtKB-KW"/>
</dbReference>
<dbReference type="GO" id="GO:0007165">
    <property type="term" value="P:signal transduction"/>
    <property type="evidence" value="ECO:0007669"/>
    <property type="project" value="InterPro"/>
</dbReference>
<dbReference type="GO" id="GO:0046718">
    <property type="term" value="P:symbiont entry into host cell"/>
    <property type="evidence" value="ECO:0007669"/>
    <property type="project" value="UniProtKB-KW"/>
</dbReference>
<dbReference type="GO" id="GO:0052170">
    <property type="term" value="P:symbiont-mediated suppression of host innate immune response"/>
    <property type="evidence" value="ECO:0007669"/>
    <property type="project" value="UniProtKB-KW"/>
</dbReference>
<dbReference type="GO" id="GO:0039527">
    <property type="term" value="P:symbiont-mediated suppression of host TRAF-mediated signal transduction"/>
    <property type="evidence" value="ECO:0007669"/>
    <property type="project" value="UniProtKB-KW"/>
</dbReference>
<dbReference type="GO" id="GO:0019062">
    <property type="term" value="P:virion attachment to host cell"/>
    <property type="evidence" value="ECO:0007669"/>
    <property type="project" value="UniProtKB-KW"/>
</dbReference>
<dbReference type="Gene3D" id="1.10.8.1320">
    <property type="match status" value="1"/>
</dbReference>
<dbReference type="InterPro" id="IPR016402">
    <property type="entry name" value="Envelope_glycoprot_Hantavirus"/>
</dbReference>
<dbReference type="InterPro" id="IPR048791">
    <property type="entry name" value="Gc_C_bunya"/>
</dbReference>
<dbReference type="InterPro" id="IPR048790">
    <property type="entry name" value="Gn-B_hanta"/>
</dbReference>
<dbReference type="InterPro" id="IPR002532">
    <property type="entry name" value="Hanta_Gc_N"/>
</dbReference>
<dbReference type="InterPro" id="IPR002534">
    <property type="entry name" value="Hanta_Gn-H"/>
</dbReference>
<dbReference type="InterPro" id="IPR012316">
    <property type="entry name" value="ITAM_motif_hantavir-typ"/>
</dbReference>
<dbReference type="Pfam" id="PF20682">
    <property type="entry name" value="Hanta_Gc_C"/>
    <property type="match status" value="1"/>
</dbReference>
<dbReference type="Pfam" id="PF01561">
    <property type="entry name" value="Hanta_Gc_N"/>
    <property type="match status" value="1"/>
</dbReference>
<dbReference type="Pfam" id="PF20679">
    <property type="entry name" value="Hanta_Gn-B"/>
    <property type="match status" value="1"/>
</dbReference>
<dbReference type="Pfam" id="PF01567">
    <property type="entry name" value="Hanta_Gn-H"/>
    <property type="match status" value="1"/>
</dbReference>
<dbReference type="Pfam" id="PF10538">
    <property type="entry name" value="ITAM_Cys-rich"/>
    <property type="match status" value="1"/>
</dbReference>
<dbReference type="PIRSF" id="PIRSF003945">
    <property type="entry name" value="M_poly_HantaV"/>
    <property type="match status" value="1"/>
</dbReference>
<dbReference type="PROSITE" id="PS51056">
    <property type="entry name" value="ITAM_2"/>
    <property type="match status" value="1"/>
</dbReference>
<organismHost>
    <name type="scientific">Homo sapiens</name>
    <name type="common">Human</name>
    <dbReference type="NCBI Taxonomy" id="9606"/>
</organismHost>
<organismHost>
    <name type="scientific">Myodes glareolus</name>
    <name type="common">Bank vole</name>
    <name type="synonym">Clethrionomys glareolus</name>
    <dbReference type="NCBI Taxonomy" id="447135"/>
</organismHost>
<keyword id="KW-1015">Disulfide bond</keyword>
<keyword id="KW-1170">Fusion of virus membrane with host endosomal membrane</keyword>
<keyword id="KW-1168">Fusion of virus membrane with host membrane</keyword>
<keyword id="KW-0325">Glycoprotein</keyword>
<keyword id="KW-1038">Host endoplasmic reticulum</keyword>
<keyword id="KW-1040">Host Golgi apparatus</keyword>
<keyword id="KW-1043">Host membrane</keyword>
<keyword id="KW-1045">Host mitochondrion</keyword>
<keyword id="KW-0945">Host-virus interaction</keyword>
<keyword id="KW-1090">Inhibition of host innate immune response by virus</keyword>
<keyword id="KW-1113">Inhibition of host RLR pathway by virus</keyword>
<keyword id="KW-1110">Inhibition of host TRAFs by virus</keyword>
<keyword id="KW-0472">Membrane</keyword>
<keyword id="KW-0479">Metal-binding</keyword>
<keyword id="KW-0597">Phosphoprotein</keyword>
<keyword id="KW-1185">Reference proteome</keyword>
<keyword id="KW-0677">Repeat</keyword>
<keyword id="KW-0732">Signal</keyword>
<keyword id="KW-0812">Transmembrane</keyword>
<keyword id="KW-1133">Transmembrane helix</keyword>
<keyword id="KW-1161">Viral attachment to host cell</keyword>
<keyword id="KW-0899">Viral immunoevasion</keyword>
<keyword id="KW-1162">Viral penetration into host cytoplasm</keyword>
<keyword id="KW-0946">Virion</keyword>
<keyword id="KW-1160">Virus entry into host cell</keyword>
<keyword id="KW-0862">Zinc</keyword>
<keyword id="KW-0863">Zinc-finger</keyword>
<organism>
    <name type="scientific">Puumala virus (strain Sotkamo/V-2969/81)</name>
    <dbReference type="NCBI Taxonomy" id="39002"/>
    <lineage>
        <taxon>Viruses</taxon>
        <taxon>Riboviria</taxon>
        <taxon>Orthornavirae</taxon>
        <taxon>Negarnaviricota</taxon>
        <taxon>Polyploviricotina</taxon>
        <taxon>Ellioviricetes</taxon>
        <taxon>Bunyavirales</taxon>
        <taxon>Hantaviridae</taxon>
        <taxon>Mammantavirinae</taxon>
        <taxon>Orthohantavirus</taxon>
        <taxon>Orthohantavirus puumalaense</taxon>
    </lineage>
</organism>
<reference key="1">
    <citation type="journal article" date="1992" name="J. Gen. Virol.">
        <title>Cloning and sequencing of Puumala virus Sotkamo strain S and M RNA segments: evidence for strain variation in hantaviruses and expression of the nucleocapsid protein.</title>
        <authorList>
            <person name="Vapalahti O.P."/>
            <person name="Kallio-Kokko H."/>
            <person name="Salonen E.M."/>
            <person name="Brummer-Korvenkontio M."/>
            <person name="Vaheri A."/>
        </authorList>
    </citation>
    <scope>NUCLEOTIDE SEQUENCE [GENOMIC RNA]</scope>
</reference>
<reference key="2">
    <citation type="journal article" date="2012" name="Virus Genes">
        <title>Resequencing of the Puumala virus strain Sotkamo from the WHO Arbovirus collection.</title>
        <authorList>
            <person name="Kurolt I.C."/>
            <person name="Paessler S."/>
            <person name="Markotic A."/>
        </authorList>
    </citation>
    <scope>NUCLEOTIDE SEQUENCE [GENOMIC RNA]</scope>
    <source>
        <strain>Isolate Sotkamo 2009/WHO Arbovirus collection</strain>
    </source>
</reference>
<reference key="3">
    <citation type="journal article" date="2010" name="J. Gen. Virol.">
        <title>Cytoplasmic tails of hantavirus glycoproteins interact with the nucleocapsid protein.</title>
        <authorList>
            <person name="Hepojoki J."/>
            <person name="Strandin T."/>
            <person name="Wang H."/>
            <person name="Vapalahti O."/>
            <person name="Vaheri A."/>
            <person name="Lankinen H."/>
        </authorList>
    </citation>
    <scope>DOMAIN (GLYCOPROTEIN N)</scope>
    <scope>INTERACTION WITH THE NUCLEOPROTEIN (GLYCOPROTEIN N)</scope>
    <scope>DOMAIN (GLYCOPROTEIN C)</scope>
    <scope>INTERACTION WITH THE NUCLEOPROTEIN (GLYCOPROTEIN C)</scope>
</reference>
<reference key="4">
    <citation type="journal article" date="2011" name="Virology">
        <title>The cytoplasmic tail of hantavirus Gn glycoprotein interacts with RNA.</title>
        <authorList>
            <person name="Strandin T."/>
            <person name="Hepojoki J."/>
            <person name="Wang H."/>
            <person name="Vaheri A."/>
            <person name="Lankinen H."/>
        </authorList>
    </citation>
    <scope>FUNCTION (GLYCOPROTEIN N)</scope>
    <scope>DOMAIN (GLYCOPROTEIN N)</scope>
</reference>
<reference key="5">
    <citation type="journal article" date="2014" name="Viruses">
        <title>Hantavirus Gn and Gc envelope glycoproteins: key structural units for virus cell entry and virus assembly.</title>
        <authorList>
            <person name="Cifuentes-Munoz N."/>
            <person name="Salazar-Quiroz N."/>
            <person name="Tischler N.D."/>
        </authorList>
    </citation>
    <scope>REVIEW</scope>
</reference>
<reference key="6">
    <citation type="journal article" date="2019" name="Sci. Rep.">
        <title>Self-association and subcellular localization of Puumala hantavirus envelope proteins.</title>
        <authorList>
            <person name="Sperber H.S."/>
            <person name="Welke R.W."/>
            <person name="Petazzi R.A."/>
            <person name="Bergmann R."/>
            <person name="Schade M."/>
            <person name="Shai Y."/>
            <person name="Chiantia S."/>
            <person name="Herrmann A."/>
            <person name="Schwarzer R."/>
        </authorList>
    </citation>
    <scope>SUBUNIT (GLYCOPROTEIN N)</scope>
    <scope>SUBUNIT (GLYCOPROTEIN C)</scope>
    <scope>SUBCELLULAR LOCATION (GLYCOPROTEIN N)</scope>
    <scope>SUBCELLULAR LOCATION (GLYCOPROTEIN C)</scope>
    <scope>DOMAIN (GLYCOPROTEIN C)</scope>
</reference>
<protein>
    <recommendedName>
        <fullName>Envelopment polyprotein</fullName>
    </recommendedName>
    <alternativeName>
        <fullName>M polyprotein</fullName>
    </alternativeName>
    <component>
        <recommendedName>
            <fullName evidence="2">Glycoprotein N</fullName>
            <shortName>Gn</shortName>
        </recommendedName>
        <alternativeName>
            <fullName>Glycoprotein G1</fullName>
        </alternativeName>
    </component>
    <component>
        <recommendedName>
            <fullName evidence="2">Glycoprotein C</fullName>
            <shortName>Gc</shortName>
        </recommendedName>
        <alternativeName>
            <fullName>Glycoprotein G2</fullName>
        </alternativeName>
    </component>
</protein>
<sequence>MGKSSPVCLYLILQGLLLFDTVNAKNLNELKMECPHTIGLGQGLVVGSVELPPVPIQQIESLKLESSCNFDLHTSTAGQQSFTKWTWETKGDLAENTQASSTSFQTKSSEVNLRGLCLIPTLVVETAARMRKTIACYDLSCNQTVCQPTVYLMGPIQTCLTTKSCLLGLGDQRIQVNYERTYCVSGQLVEGVCFNPIHTMALSQPSHTYDIVTIMVRCFLVIKKVTSGDSMKIEKNFETLVQKTGCTANGFQGYYICLIGSSSEPLYVPTLDDYRSAEVLSRMAFAPHGEDHDIEKNAVSALRIAGKVTGKAPSTESSDTVQGIAFSGSPLYTSTGVLTAKDDPVYVWAPGIIMEGNHSVCEKKTLPLTWTGFIPLPGEIEKTTQCTVFCTLAGPGADCEAYSETGIFNISSPTCLINRVQRFRGAEQQIKFVCQRVDMDITVYCNGVKKVILTKTLVIGQCIYTFTSIFSMIPGIAHSLAVELCVPGLHGWATVLLLLTFCFGWVLIPTITMILLKILIAFAYLCSKYNTDSKFRILVEKVKKEYQKTMGSMVCEVCQYECETAKELESHRKSCSIGSCPYCLNPSEATPSALQAHFKVCKLTSRFQENLKKSLTMYEPMQGCYRTLSLFRYRSRFFVGLVWCMLLVLELIVWAASAETQNLNDGWTDTAHGSGIIPMKADLELDFSLPSSASYTYRRQLQNPANEQEKIPFHLQISKQVIHAEIQHLGHWMDATFNLKTAFHCYGSCEKYAYPWQTAGCFVEKDYEYETGWGCNPPDCPGVGTGCTACGVYLDKLKSVGKVFKIVSLRYTRKVCIQLGTGQTCKTVDSNDCLITTSVKVCLIGTISKFQPSDTLLFLGPLQQGGLIFKQWCTTTCQFGDPGDIMSTPTGMKCPELNGSFRKKCAFATTPVCQFDGNTISGYKRMVATKDSFQSFNVTEPHISTSALEWIDLDSSLRDHINVIVSRDLSFQDLSETPCQVDLTTSATDGAWGSGVGFNLVCTVSLTECSAFLTSIKACHAAMCYGSTTTNLVRGQNTIHVVGKGGHSGSKFMCCHDTKCSSTGLVAAAPHLDRVTGFNQADSDKIFDDGAPECGMSCWFKKLGEWVLGVLNGNWMVVAVLIALLILSIFLFALCCPRRPSYKKDHKP</sequence>
<evidence type="ECO:0000250" key="1"/>
<evidence type="ECO:0000250" key="2">
    <source>
        <dbReference type="UniProtKB" id="P08668"/>
    </source>
</evidence>
<evidence type="ECO:0000250" key="3">
    <source>
        <dbReference type="UniProtKB" id="P0DTJ1"/>
    </source>
</evidence>
<evidence type="ECO:0000250" key="4">
    <source>
        <dbReference type="UniProtKB" id="P41266"/>
    </source>
</evidence>
<evidence type="ECO:0000250" key="5">
    <source>
        <dbReference type="UniProtKB" id="Q9E006"/>
    </source>
</evidence>
<evidence type="ECO:0000255" key="6"/>
<evidence type="ECO:0000255" key="7">
    <source>
        <dbReference type="PROSITE-ProRule" id="PRU00379"/>
    </source>
</evidence>
<evidence type="ECO:0000269" key="8">
    <source>
    </source>
</evidence>
<evidence type="ECO:0000269" key="9">
    <source>
    </source>
</evidence>
<evidence type="ECO:0000269" key="10">
    <source>
    </source>
</evidence>
<evidence type="ECO:0000303" key="11">
    <source>
    </source>
</evidence>
<evidence type="ECO:0000305" key="12"/>
<evidence type="ECO:0000305" key="13">
    <source>
    </source>
</evidence>